<sequence length="269" mass="30882">MQRYFIYLAYDGTNYHGWQIQPNGSSVQECLMKALSTFLRRDVEVIGAGRTDAGVHASLMVAHFDHEDVLDTVTVADKLNRLLPPDISVYRVRQVKPDAHARFDATARTYKYYVTTAKYPFNRQYRYRVYGSLDYERMNEAARTLFEYIDFTSFSKLHTDVKTNICHISHAEWTKMEGEDTTWVFTIRADRFLRNMVRAIVGTLLEVGRGKLTVEGFRKVIEQQDRCKAGTSAPGNALFLVNVEYPEDIFSEETKKSVLSTLLPEGGEC</sequence>
<gene>
    <name evidence="1" type="primary">truA</name>
    <name type="ordered locus">BT_4237</name>
</gene>
<proteinExistence type="inferred from homology"/>
<comment type="function">
    <text evidence="1">Formation of pseudouridine at positions 38, 39 and 40 in the anticodon stem and loop of transfer RNAs.</text>
</comment>
<comment type="catalytic activity">
    <reaction evidence="1">
        <text>uridine(38/39/40) in tRNA = pseudouridine(38/39/40) in tRNA</text>
        <dbReference type="Rhea" id="RHEA:22376"/>
        <dbReference type="Rhea" id="RHEA-COMP:10085"/>
        <dbReference type="Rhea" id="RHEA-COMP:10087"/>
        <dbReference type="ChEBI" id="CHEBI:65314"/>
        <dbReference type="ChEBI" id="CHEBI:65315"/>
        <dbReference type="EC" id="5.4.99.12"/>
    </reaction>
</comment>
<comment type="subunit">
    <text evidence="1">Homodimer.</text>
</comment>
<comment type="similarity">
    <text evidence="1">Belongs to the tRNA pseudouridine synthase TruA family.</text>
</comment>
<accession>Q89ZY4</accession>
<dbReference type="EC" id="5.4.99.12" evidence="1"/>
<dbReference type="EMBL" id="AE015928">
    <property type="protein sequence ID" value="AAO79342.1"/>
    <property type="molecule type" value="Genomic_DNA"/>
</dbReference>
<dbReference type="RefSeq" id="NP_813148.1">
    <property type="nucleotide sequence ID" value="NC_004663.1"/>
</dbReference>
<dbReference type="RefSeq" id="WP_008764438.1">
    <property type="nucleotide sequence ID" value="NC_004663.1"/>
</dbReference>
<dbReference type="SMR" id="Q89ZY4"/>
<dbReference type="FunCoup" id="Q89ZY4">
    <property type="interactions" value="460"/>
</dbReference>
<dbReference type="STRING" id="226186.BT_4237"/>
<dbReference type="PaxDb" id="226186-BT_4237"/>
<dbReference type="EnsemblBacteria" id="AAO79342">
    <property type="protein sequence ID" value="AAO79342"/>
    <property type="gene ID" value="BT_4237"/>
</dbReference>
<dbReference type="GeneID" id="60925412"/>
<dbReference type="KEGG" id="bth:BT_4237"/>
<dbReference type="PATRIC" id="fig|226186.12.peg.4308"/>
<dbReference type="eggNOG" id="COG0101">
    <property type="taxonomic scope" value="Bacteria"/>
</dbReference>
<dbReference type="HOGENOM" id="CLU_014673_0_1_10"/>
<dbReference type="InParanoid" id="Q89ZY4"/>
<dbReference type="OrthoDB" id="9811823at2"/>
<dbReference type="Proteomes" id="UP000001414">
    <property type="component" value="Chromosome"/>
</dbReference>
<dbReference type="GO" id="GO:0009982">
    <property type="term" value="F:pseudouridine synthase activity"/>
    <property type="evidence" value="ECO:0000318"/>
    <property type="project" value="GO_Central"/>
</dbReference>
<dbReference type="GO" id="GO:0003723">
    <property type="term" value="F:RNA binding"/>
    <property type="evidence" value="ECO:0007669"/>
    <property type="project" value="InterPro"/>
</dbReference>
<dbReference type="GO" id="GO:0160147">
    <property type="term" value="F:tRNA pseudouridine(38-40) synthase activity"/>
    <property type="evidence" value="ECO:0007669"/>
    <property type="project" value="UniProtKB-EC"/>
</dbReference>
<dbReference type="GO" id="GO:0031119">
    <property type="term" value="P:tRNA pseudouridine synthesis"/>
    <property type="evidence" value="ECO:0000318"/>
    <property type="project" value="GO_Central"/>
</dbReference>
<dbReference type="CDD" id="cd02570">
    <property type="entry name" value="PseudoU_synth_EcTruA"/>
    <property type="match status" value="1"/>
</dbReference>
<dbReference type="FunFam" id="3.30.70.580:FF:000001">
    <property type="entry name" value="tRNA pseudouridine synthase A"/>
    <property type="match status" value="1"/>
</dbReference>
<dbReference type="Gene3D" id="3.30.70.660">
    <property type="entry name" value="Pseudouridine synthase I, catalytic domain, C-terminal subdomain"/>
    <property type="match status" value="1"/>
</dbReference>
<dbReference type="Gene3D" id="3.30.70.580">
    <property type="entry name" value="Pseudouridine synthase I, catalytic domain, N-terminal subdomain"/>
    <property type="match status" value="1"/>
</dbReference>
<dbReference type="HAMAP" id="MF_00171">
    <property type="entry name" value="TruA"/>
    <property type="match status" value="1"/>
</dbReference>
<dbReference type="InterPro" id="IPR020103">
    <property type="entry name" value="PsdUridine_synth_cat_dom_sf"/>
</dbReference>
<dbReference type="InterPro" id="IPR001406">
    <property type="entry name" value="PsdUridine_synth_TruA"/>
</dbReference>
<dbReference type="InterPro" id="IPR020097">
    <property type="entry name" value="PsdUridine_synth_TruA_a/b_dom"/>
</dbReference>
<dbReference type="InterPro" id="IPR020095">
    <property type="entry name" value="PsdUridine_synth_TruA_C"/>
</dbReference>
<dbReference type="InterPro" id="IPR020094">
    <property type="entry name" value="TruA/RsuA/RluB/E/F_N"/>
</dbReference>
<dbReference type="NCBIfam" id="TIGR00071">
    <property type="entry name" value="hisT_truA"/>
    <property type="match status" value="1"/>
</dbReference>
<dbReference type="PANTHER" id="PTHR11142">
    <property type="entry name" value="PSEUDOURIDYLATE SYNTHASE"/>
    <property type="match status" value="1"/>
</dbReference>
<dbReference type="PANTHER" id="PTHR11142:SF0">
    <property type="entry name" value="TRNA PSEUDOURIDINE SYNTHASE-LIKE 1"/>
    <property type="match status" value="1"/>
</dbReference>
<dbReference type="Pfam" id="PF01416">
    <property type="entry name" value="PseudoU_synth_1"/>
    <property type="match status" value="2"/>
</dbReference>
<dbReference type="PIRSF" id="PIRSF001430">
    <property type="entry name" value="tRNA_psdUrid_synth"/>
    <property type="match status" value="1"/>
</dbReference>
<dbReference type="SUPFAM" id="SSF55120">
    <property type="entry name" value="Pseudouridine synthase"/>
    <property type="match status" value="1"/>
</dbReference>
<name>TRUA_BACTN</name>
<evidence type="ECO:0000255" key="1">
    <source>
        <dbReference type="HAMAP-Rule" id="MF_00171"/>
    </source>
</evidence>
<feature type="chain" id="PRO_0000057335" description="tRNA pseudouridine synthase A">
    <location>
        <begin position="1"/>
        <end position="269"/>
    </location>
</feature>
<feature type="active site" description="Nucleophile" evidence="1">
    <location>
        <position position="52"/>
    </location>
</feature>
<feature type="binding site" evidence="1">
    <location>
        <position position="110"/>
    </location>
    <ligand>
        <name>substrate</name>
    </ligand>
</feature>
<keyword id="KW-0413">Isomerase</keyword>
<keyword id="KW-1185">Reference proteome</keyword>
<keyword id="KW-0819">tRNA processing</keyword>
<protein>
    <recommendedName>
        <fullName evidence="1">tRNA pseudouridine synthase A</fullName>
        <ecNumber evidence="1">5.4.99.12</ecNumber>
    </recommendedName>
    <alternativeName>
        <fullName evidence="1">tRNA pseudouridine(38-40) synthase</fullName>
    </alternativeName>
    <alternativeName>
        <fullName evidence="1">tRNA pseudouridylate synthase I</fullName>
    </alternativeName>
    <alternativeName>
        <fullName evidence="1">tRNA-uridine isomerase I</fullName>
    </alternativeName>
</protein>
<organism>
    <name type="scientific">Bacteroides thetaiotaomicron (strain ATCC 29148 / DSM 2079 / JCM 5827 / CCUG 10774 / NCTC 10582 / VPI-5482 / E50)</name>
    <dbReference type="NCBI Taxonomy" id="226186"/>
    <lineage>
        <taxon>Bacteria</taxon>
        <taxon>Pseudomonadati</taxon>
        <taxon>Bacteroidota</taxon>
        <taxon>Bacteroidia</taxon>
        <taxon>Bacteroidales</taxon>
        <taxon>Bacteroidaceae</taxon>
        <taxon>Bacteroides</taxon>
    </lineage>
</organism>
<reference key="1">
    <citation type="journal article" date="2003" name="Science">
        <title>A genomic view of the human-Bacteroides thetaiotaomicron symbiosis.</title>
        <authorList>
            <person name="Xu J."/>
            <person name="Bjursell M.K."/>
            <person name="Himrod J."/>
            <person name="Deng S."/>
            <person name="Carmichael L.K."/>
            <person name="Chiang H.C."/>
            <person name="Hooper L.V."/>
            <person name="Gordon J.I."/>
        </authorList>
    </citation>
    <scope>NUCLEOTIDE SEQUENCE [LARGE SCALE GENOMIC DNA]</scope>
    <source>
        <strain>ATCC 29148 / DSM 2079 / JCM 5827 / CCUG 10774 / NCTC 10582 / VPI-5482 / E50</strain>
    </source>
</reference>